<reference evidence="6" key="1">
    <citation type="submission" date="2017-05" db="EMBL/GenBank/DDBJ databases">
        <title>PacBio assembly of a Plasmodium knowlesi genome sequence with Hi-C correction and manual annotation of the SICAvar gene family.</title>
        <authorList>
            <person name="Lapp S.A."/>
            <person name="Geraldo J.A."/>
            <person name="Chien J.-T."/>
            <person name="Ay F."/>
            <person name="Pakala S.B."/>
            <person name="Batugedara G."/>
            <person name="Humphrey J.C."/>
            <person name="Debarry J.D."/>
            <person name="Le Roch K.G."/>
            <person name="Galinski M.R."/>
            <person name="Kissinger J.C."/>
        </authorList>
    </citation>
    <scope>NUCLEOTIDE SEQUENCE [LARGE SCALE GENOMIC DNA]</scope>
    <source>
        <strain evidence="6">Malayan Strain Pk1 (A+)</strain>
    </source>
</reference>
<reference evidence="3" key="2">
    <citation type="journal article" date="2009" name="Biochemistry">
        <title>Structural and metabolic specificity of methylthiocoformycin for malarial adenosine deaminases.</title>
        <authorList>
            <person name="Ho M.C."/>
            <person name="Cassera M.B."/>
            <person name="Madrid D.C."/>
            <person name="Ting L.M."/>
            <person name="Tyler P.C."/>
            <person name="Kim K."/>
            <person name="Almo S.C."/>
            <person name="Schramm V.L."/>
        </authorList>
    </citation>
    <scope>FUNCTION</scope>
    <scope>CATALYTIC ACTIVITY</scope>
    <scope>ACTIVITY REGULATION</scope>
    <scope>BIOPHYSICOCHEMICAL PROPERTIES</scope>
    <scope>PATHWAY</scope>
</reference>
<sequence length="363" mass="41906">MNILQEPIDFLKKDELKNIDLSQMDKKERYKIWKRIPKCELHCHLDLCFSADFFLSCVRKYNLQPNLSDEEVLDYYLFAKGGKSLGEFVEKAIRVADIFQDYEMIEDLAKHAVFNKYKEGVVLMEFRYSPTFVAFKHNLDIELIHQAIVKGIKEVVELLDHKIDVTLLCIGDTGHRAADIKASADFCLKHKADFVGFDHGGHEVDLKPYKEIFDYVKEGGMHLTVHAGEDVTLPNLNTLYSAIQVLKVERIGHGIRVSESQELIDMVKENNILLEVCPISNVLLKNAKSFDTHPIRKLYDAGVKVSVSSDDPGMFLTNINDDYEKLYTHLHFTLEDFMKMNEWALEKSFIGCDIKEKIKKLYF</sequence>
<organism evidence="6">
    <name type="scientific">Plasmodium knowlesi</name>
    <dbReference type="NCBI Taxonomy" id="5850"/>
    <lineage>
        <taxon>Eukaryota</taxon>
        <taxon>Sar</taxon>
        <taxon>Alveolata</taxon>
        <taxon>Apicomplexa</taxon>
        <taxon>Aconoidasida</taxon>
        <taxon>Haemosporida</taxon>
        <taxon>Plasmodiidae</taxon>
        <taxon>Plasmodium</taxon>
        <taxon>Plasmodium (Plasmodium)</taxon>
    </lineage>
</organism>
<comment type="function">
    <text evidence="2 4">Catalyzes the hydrolytic deamination of adenosine to produce inosine (PubMed:19728741). Unlike mammalian adenosine deaminases, also catalyzes the deamination of 5'-methylthioadenosine (MTA), a by-product of polyamine biosynthesis, to produce 5'-methylthioinosine (MTI) (PubMed:19728741). Plays an essential role in the purine salvage pathway which allows the parasite to use host cell purines for the synthesis of nucleic acids (Probable).</text>
</comment>
<comment type="catalytic activity">
    <reaction evidence="2">
        <text>adenosine + H2O + H(+) = inosine + NH4(+)</text>
        <dbReference type="Rhea" id="RHEA:24408"/>
        <dbReference type="ChEBI" id="CHEBI:15377"/>
        <dbReference type="ChEBI" id="CHEBI:15378"/>
        <dbReference type="ChEBI" id="CHEBI:16335"/>
        <dbReference type="ChEBI" id="CHEBI:17596"/>
        <dbReference type="ChEBI" id="CHEBI:28938"/>
        <dbReference type="EC" id="3.5.4.4"/>
    </reaction>
</comment>
<comment type="catalytic activity">
    <reaction evidence="2">
        <text>S-methyl-5'-thioadenosine + H2O + H(+) = S-methyl-5'-thioinosine + NH4(+)</text>
        <dbReference type="Rhea" id="RHEA:25025"/>
        <dbReference type="ChEBI" id="CHEBI:15377"/>
        <dbReference type="ChEBI" id="CHEBI:15378"/>
        <dbReference type="ChEBI" id="CHEBI:17509"/>
        <dbReference type="ChEBI" id="CHEBI:28938"/>
        <dbReference type="ChEBI" id="CHEBI:48595"/>
        <dbReference type="EC" id="3.5.4.31"/>
    </reaction>
</comment>
<comment type="cofactor">
    <cofactor evidence="1">
        <name>Zn(2+)</name>
        <dbReference type="ChEBI" id="CHEBI:29105"/>
    </cofactor>
    <text evidence="1">Binds 1 zinc ion per subunit.</text>
</comment>
<comment type="activity regulation">
    <text evidence="2">Inhibited by coformycin and methylthiocoformycin (MT-coformycin).</text>
</comment>
<comment type="biophysicochemical properties">
    <kinetics>
        <KM evidence="2">120 uM for adenosine (at pH 8)</KM>
        <KM evidence="2">22 uM for 5'-methylthioadenosine (MTA) (at pH 8)</KM>
        <text evidence="2">kcat is 6.8 sec(-1) with adenosine as substrate (PubMed:19728741). kcat is 0.51 sec(-1) with 5'-methylthioadenosine as substrate (PubMed:19728741).</text>
    </kinetics>
</comment>
<comment type="pathway">
    <text evidence="4">Purine metabolism; purine nucleoside salvage.</text>
</comment>
<comment type="similarity">
    <text evidence="3">Belongs to the metallo-dependent hydrolases superfamily. Adenosine and AMP deaminases family.</text>
</comment>
<keyword id="KW-0378">Hydrolase</keyword>
<keyword id="KW-0479">Metal-binding</keyword>
<keyword id="KW-0660">Purine salvage</keyword>
<keyword id="KW-0862">Zinc</keyword>
<dbReference type="EC" id="3.5.4.4" evidence="2"/>
<dbReference type="EC" id="3.5.4.31" evidence="2"/>
<dbReference type="EMBL" id="NETL01000017">
    <property type="protein sequence ID" value="OTN68356.1"/>
    <property type="molecule type" value="Genomic_DNA"/>
</dbReference>
<dbReference type="SMR" id="A0A1Y3DYH2"/>
<dbReference type="VEuPathDB" id="PlasmoDB:PKA1H_060019400"/>
<dbReference type="VEuPathDB" id="PlasmoDB:PKNH_0614300"/>
<dbReference type="VEuPathDB" id="PlasmoDB:PKNOH_S03329100"/>
<dbReference type="eggNOG" id="KOG1097">
    <property type="taxonomic scope" value="Eukaryota"/>
</dbReference>
<dbReference type="OMA" id="NHFTIHA"/>
<dbReference type="OrthoDB" id="370at418103"/>
<dbReference type="UniPathway" id="UPA00606"/>
<dbReference type="Proteomes" id="UP000195012">
    <property type="component" value="Unassembled WGS sequence"/>
</dbReference>
<dbReference type="GO" id="GO:0005829">
    <property type="term" value="C:cytosol"/>
    <property type="evidence" value="ECO:0007669"/>
    <property type="project" value="TreeGrafter"/>
</dbReference>
<dbReference type="GO" id="GO:0009897">
    <property type="term" value="C:external side of plasma membrane"/>
    <property type="evidence" value="ECO:0007669"/>
    <property type="project" value="TreeGrafter"/>
</dbReference>
<dbReference type="GO" id="GO:0090614">
    <property type="term" value="F:5'-methylthioadenosine deaminase activity"/>
    <property type="evidence" value="ECO:0000314"/>
    <property type="project" value="UniProtKB"/>
</dbReference>
<dbReference type="GO" id="GO:0004000">
    <property type="term" value="F:adenosine deaminase activity"/>
    <property type="evidence" value="ECO:0000314"/>
    <property type="project" value="UniProtKB"/>
</dbReference>
<dbReference type="GO" id="GO:0046872">
    <property type="term" value="F:metal ion binding"/>
    <property type="evidence" value="ECO:0007669"/>
    <property type="project" value="UniProtKB-KW"/>
</dbReference>
<dbReference type="GO" id="GO:0006154">
    <property type="term" value="P:adenosine catabolic process"/>
    <property type="evidence" value="ECO:0007669"/>
    <property type="project" value="TreeGrafter"/>
</dbReference>
<dbReference type="GO" id="GO:0043103">
    <property type="term" value="P:hypoxanthine salvage"/>
    <property type="evidence" value="ECO:0007669"/>
    <property type="project" value="TreeGrafter"/>
</dbReference>
<dbReference type="GO" id="GO:0046103">
    <property type="term" value="P:inosine biosynthetic process"/>
    <property type="evidence" value="ECO:0007669"/>
    <property type="project" value="TreeGrafter"/>
</dbReference>
<dbReference type="GO" id="GO:0060169">
    <property type="term" value="P:negative regulation of adenosine receptor signaling pathway"/>
    <property type="evidence" value="ECO:0007669"/>
    <property type="project" value="TreeGrafter"/>
</dbReference>
<dbReference type="GO" id="GO:0009168">
    <property type="term" value="P:purine ribonucleoside monophosphate biosynthetic process"/>
    <property type="evidence" value="ECO:0007669"/>
    <property type="project" value="InterPro"/>
</dbReference>
<dbReference type="GO" id="GO:0006166">
    <property type="term" value="P:purine ribonucleoside salvage"/>
    <property type="evidence" value="ECO:0007669"/>
    <property type="project" value="UniProtKB-KW"/>
</dbReference>
<dbReference type="Gene3D" id="3.20.20.140">
    <property type="entry name" value="Metal-dependent hydrolases"/>
    <property type="match status" value="1"/>
</dbReference>
<dbReference type="InterPro" id="IPR006650">
    <property type="entry name" value="A/AMP_deam_AS"/>
</dbReference>
<dbReference type="InterPro" id="IPR001365">
    <property type="entry name" value="A_deaminase_dom"/>
</dbReference>
<dbReference type="InterPro" id="IPR006330">
    <property type="entry name" value="Ado/ade_deaminase"/>
</dbReference>
<dbReference type="InterPro" id="IPR032466">
    <property type="entry name" value="Metal_Hydrolase"/>
</dbReference>
<dbReference type="PANTHER" id="PTHR11409">
    <property type="entry name" value="ADENOSINE DEAMINASE"/>
    <property type="match status" value="1"/>
</dbReference>
<dbReference type="PANTHER" id="PTHR11409:SF43">
    <property type="entry name" value="ADENOSINE DEAMINASE"/>
    <property type="match status" value="1"/>
</dbReference>
<dbReference type="Pfam" id="PF00962">
    <property type="entry name" value="A_deaminase"/>
    <property type="match status" value="1"/>
</dbReference>
<dbReference type="SUPFAM" id="SSF51556">
    <property type="entry name" value="Metallo-dependent hydrolases"/>
    <property type="match status" value="1"/>
</dbReference>
<dbReference type="PROSITE" id="PS00485">
    <property type="entry name" value="A_DEAMINASE"/>
    <property type="match status" value="1"/>
</dbReference>
<feature type="chain" id="PRO_0000451867" description="Adenosine deaminase">
    <location>
        <begin position="1"/>
        <end position="363"/>
    </location>
</feature>
<feature type="region of interest" description="Gating helix loop; regulates binding affinity for substrates and thus substrate selectivity" evidence="1">
    <location>
        <begin position="170"/>
        <end position="184"/>
    </location>
</feature>
<feature type="binding site" evidence="1">
    <location>
        <position position="42"/>
    </location>
    <ligand>
        <name>Zn(2+)</name>
        <dbReference type="ChEBI" id="CHEBI:29105"/>
        <note>catalytic</note>
    </ligand>
</feature>
<feature type="binding site" evidence="1">
    <location>
        <begin position="44"/>
        <end position="46"/>
    </location>
    <ligand>
        <name>a purine D-ribonucleoside</name>
        <dbReference type="ChEBI" id="CHEBI:142355"/>
    </ligand>
</feature>
<feature type="binding site" evidence="1">
    <location>
        <position position="44"/>
    </location>
    <ligand>
        <name>Zn(2+)</name>
        <dbReference type="ChEBI" id="CHEBI:29105"/>
        <note>catalytic</note>
    </ligand>
</feature>
<feature type="binding site" evidence="1">
    <location>
        <position position="172"/>
    </location>
    <ligand>
        <name>a purine D-ribonucleoside</name>
        <dbReference type="ChEBI" id="CHEBI:142355"/>
    </ligand>
</feature>
<feature type="binding site" evidence="1">
    <location>
        <position position="201"/>
    </location>
    <ligand>
        <name>a purine D-ribonucleoside</name>
        <dbReference type="ChEBI" id="CHEBI:142355"/>
    </ligand>
</feature>
<feature type="binding site" evidence="1">
    <location>
        <position position="226"/>
    </location>
    <ligand>
        <name>Zn(2+)</name>
        <dbReference type="ChEBI" id="CHEBI:29105"/>
        <note>catalytic</note>
    </ligand>
</feature>
<feature type="binding site" evidence="1">
    <location>
        <position position="229"/>
    </location>
    <ligand>
        <name>a purine D-ribonucleoside</name>
        <dbReference type="ChEBI" id="CHEBI:142355"/>
    </ligand>
</feature>
<feature type="binding site" evidence="1">
    <location>
        <position position="253"/>
    </location>
    <ligand>
        <name>a purine D-ribonucleoside</name>
        <dbReference type="ChEBI" id="CHEBI:142355"/>
    </ligand>
</feature>
<feature type="binding site" evidence="1">
    <location>
        <position position="310"/>
    </location>
    <ligand>
        <name>a purine D-ribonucleoside</name>
        <dbReference type="ChEBI" id="CHEBI:142355"/>
    </ligand>
</feature>
<feature type="binding site" evidence="1">
    <location>
        <position position="310"/>
    </location>
    <ligand>
        <name>Zn(2+)</name>
        <dbReference type="ChEBI" id="CHEBI:29105"/>
        <note>catalytic</note>
    </ligand>
</feature>
<feature type="site" description="Important for substrate specificity for S-methyl-5'-thioadenosine" evidence="1">
    <location>
        <position position="172"/>
    </location>
</feature>
<gene>
    <name evidence="5" type="primary">ADA</name>
    <name evidence="5" type="ORF">PKNOH_S03329100</name>
</gene>
<accession>A0A1Y3DYH2</accession>
<evidence type="ECO:0000250" key="1">
    <source>
        <dbReference type="UniProtKB" id="A5KE01"/>
    </source>
</evidence>
<evidence type="ECO:0000269" key="2">
    <source>
    </source>
</evidence>
<evidence type="ECO:0000305" key="3"/>
<evidence type="ECO:0000305" key="4">
    <source>
    </source>
</evidence>
<evidence type="ECO:0000312" key="5">
    <source>
        <dbReference type="EMBL" id="OTN68356.1"/>
    </source>
</evidence>
<evidence type="ECO:0000312" key="6">
    <source>
        <dbReference type="Proteomes" id="UP000195012"/>
    </source>
</evidence>
<name>ADA_PLAKN</name>
<proteinExistence type="evidence at protein level"/>
<protein>
    <recommendedName>
        <fullName evidence="3">Adenosine deaminase</fullName>
        <ecNumber evidence="2">3.5.4.4</ecNumber>
    </recommendedName>
    <alternativeName>
        <fullName evidence="3">S-methyl-5'-thioadenosine deaminase</fullName>
        <ecNumber evidence="2">3.5.4.31</ecNumber>
    </alternativeName>
</protein>